<gene>
    <name evidence="1" type="primary">pyrE</name>
    <name type="ordered locus">lpl1212</name>
</gene>
<name>PYRE_LEGPL</name>
<evidence type="ECO:0000255" key="1">
    <source>
        <dbReference type="HAMAP-Rule" id="MF_01208"/>
    </source>
</evidence>
<reference key="1">
    <citation type="journal article" date="2004" name="Nat. Genet.">
        <title>Evidence in the Legionella pneumophila genome for exploitation of host cell functions and high genome plasticity.</title>
        <authorList>
            <person name="Cazalet C."/>
            <person name="Rusniok C."/>
            <person name="Brueggemann H."/>
            <person name="Zidane N."/>
            <person name="Magnier A."/>
            <person name="Ma L."/>
            <person name="Tichit M."/>
            <person name="Jarraud S."/>
            <person name="Bouchier C."/>
            <person name="Vandenesch F."/>
            <person name="Kunst F."/>
            <person name="Etienne J."/>
            <person name="Glaser P."/>
            <person name="Buchrieser C."/>
        </authorList>
    </citation>
    <scope>NUCLEOTIDE SEQUENCE [LARGE SCALE GENOMIC DNA]</scope>
    <source>
        <strain>Lens</strain>
    </source>
</reference>
<organism>
    <name type="scientific">Legionella pneumophila (strain Lens)</name>
    <dbReference type="NCBI Taxonomy" id="297245"/>
    <lineage>
        <taxon>Bacteria</taxon>
        <taxon>Pseudomonadati</taxon>
        <taxon>Pseudomonadota</taxon>
        <taxon>Gammaproteobacteria</taxon>
        <taxon>Legionellales</taxon>
        <taxon>Legionellaceae</taxon>
        <taxon>Legionella</taxon>
    </lineage>
</organism>
<sequence>MNHTKSSFIKLALECQVLKFGEFTLKSGRISPYFFNAGLFYHGNSIRQLGQFYAKTLLEQEISFEHLFGPAYKGIPLATATAVALAELGRDITVTFNRKEVKTHGEGGQLIGSPLTGRTVIIDDVITAGTAFRESQTLIKENGGILRGVIIALDRCERGLTEKSTLSEIREQGIEVYSIINLFDLIEFLKNDNQYEQVQKLESYHELYGAY</sequence>
<protein>
    <recommendedName>
        <fullName evidence="1">Orotate phosphoribosyltransferase</fullName>
        <shortName evidence="1">OPRT</shortName>
        <shortName evidence="1">OPRTase</shortName>
        <ecNumber evidence="1">2.4.2.10</ecNumber>
    </recommendedName>
</protein>
<comment type="function">
    <text evidence="1">Catalyzes the transfer of a ribosyl phosphate group from 5-phosphoribose 1-diphosphate to orotate, leading to the formation of orotidine monophosphate (OMP).</text>
</comment>
<comment type="catalytic activity">
    <reaction evidence="1">
        <text>orotidine 5'-phosphate + diphosphate = orotate + 5-phospho-alpha-D-ribose 1-diphosphate</text>
        <dbReference type="Rhea" id="RHEA:10380"/>
        <dbReference type="ChEBI" id="CHEBI:30839"/>
        <dbReference type="ChEBI" id="CHEBI:33019"/>
        <dbReference type="ChEBI" id="CHEBI:57538"/>
        <dbReference type="ChEBI" id="CHEBI:58017"/>
        <dbReference type="EC" id="2.4.2.10"/>
    </reaction>
</comment>
<comment type="cofactor">
    <cofactor evidence="1">
        <name>Mg(2+)</name>
        <dbReference type="ChEBI" id="CHEBI:18420"/>
    </cofactor>
</comment>
<comment type="pathway">
    <text evidence="1">Pyrimidine metabolism; UMP biosynthesis via de novo pathway; UMP from orotate: step 1/2.</text>
</comment>
<comment type="subunit">
    <text evidence="1">Homodimer.</text>
</comment>
<comment type="similarity">
    <text evidence="1">Belongs to the purine/pyrimidine phosphoribosyltransferase family. PyrE subfamily.</text>
</comment>
<proteinExistence type="inferred from homology"/>
<dbReference type="EC" id="2.4.2.10" evidence="1"/>
<dbReference type="EMBL" id="CR628337">
    <property type="protein sequence ID" value="CAH15451.1"/>
    <property type="molecule type" value="Genomic_DNA"/>
</dbReference>
<dbReference type="RefSeq" id="WP_011215304.1">
    <property type="nucleotide sequence ID" value="NC_006369.1"/>
</dbReference>
<dbReference type="SMR" id="Q5WX86"/>
<dbReference type="KEGG" id="lpf:lpl1212"/>
<dbReference type="LegioList" id="lpl1212"/>
<dbReference type="HOGENOM" id="CLU_074878_0_1_6"/>
<dbReference type="UniPathway" id="UPA00070">
    <property type="reaction ID" value="UER00119"/>
</dbReference>
<dbReference type="Proteomes" id="UP000002517">
    <property type="component" value="Chromosome"/>
</dbReference>
<dbReference type="GO" id="GO:0005737">
    <property type="term" value="C:cytoplasm"/>
    <property type="evidence" value="ECO:0007669"/>
    <property type="project" value="TreeGrafter"/>
</dbReference>
<dbReference type="GO" id="GO:0000287">
    <property type="term" value="F:magnesium ion binding"/>
    <property type="evidence" value="ECO:0007669"/>
    <property type="project" value="UniProtKB-UniRule"/>
</dbReference>
<dbReference type="GO" id="GO:0004588">
    <property type="term" value="F:orotate phosphoribosyltransferase activity"/>
    <property type="evidence" value="ECO:0007669"/>
    <property type="project" value="UniProtKB-UniRule"/>
</dbReference>
<dbReference type="GO" id="GO:0006207">
    <property type="term" value="P:'de novo' pyrimidine nucleobase biosynthetic process"/>
    <property type="evidence" value="ECO:0007669"/>
    <property type="project" value="TreeGrafter"/>
</dbReference>
<dbReference type="GO" id="GO:0044205">
    <property type="term" value="P:'de novo' UMP biosynthetic process"/>
    <property type="evidence" value="ECO:0007669"/>
    <property type="project" value="UniProtKB-UniRule"/>
</dbReference>
<dbReference type="GO" id="GO:0046132">
    <property type="term" value="P:pyrimidine ribonucleoside biosynthetic process"/>
    <property type="evidence" value="ECO:0007669"/>
    <property type="project" value="TreeGrafter"/>
</dbReference>
<dbReference type="CDD" id="cd06223">
    <property type="entry name" value="PRTases_typeI"/>
    <property type="match status" value="1"/>
</dbReference>
<dbReference type="FunFam" id="3.40.50.2020:FF:000008">
    <property type="entry name" value="Orotate phosphoribosyltransferase"/>
    <property type="match status" value="1"/>
</dbReference>
<dbReference type="Gene3D" id="3.40.50.2020">
    <property type="match status" value="1"/>
</dbReference>
<dbReference type="HAMAP" id="MF_01208">
    <property type="entry name" value="PyrE"/>
    <property type="match status" value="1"/>
</dbReference>
<dbReference type="InterPro" id="IPR023031">
    <property type="entry name" value="OPRT"/>
</dbReference>
<dbReference type="InterPro" id="IPR004467">
    <property type="entry name" value="Or_phspho_trans_dom"/>
</dbReference>
<dbReference type="InterPro" id="IPR000836">
    <property type="entry name" value="PRibTrfase_dom"/>
</dbReference>
<dbReference type="InterPro" id="IPR029057">
    <property type="entry name" value="PRTase-like"/>
</dbReference>
<dbReference type="NCBIfam" id="TIGR00336">
    <property type="entry name" value="pyrE"/>
    <property type="match status" value="1"/>
</dbReference>
<dbReference type="PANTHER" id="PTHR46683">
    <property type="entry name" value="OROTATE PHOSPHORIBOSYLTRANSFERASE 1-RELATED"/>
    <property type="match status" value="1"/>
</dbReference>
<dbReference type="PANTHER" id="PTHR46683:SF1">
    <property type="entry name" value="OROTATE PHOSPHORIBOSYLTRANSFERASE 1-RELATED"/>
    <property type="match status" value="1"/>
</dbReference>
<dbReference type="Pfam" id="PF00156">
    <property type="entry name" value="Pribosyltran"/>
    <property type="match status" value="1"/>
</dbReference>
<dbReference type="SUPFAM" id="SSF53271">
    <property type="entry name" value="PRTase-like"/>
    <property type="match status" value="1"/>
</dbReference>
<dbReference type="PROSITE" id="PS00103">
    <property type="entry name" value="PUR_PYR_PR_TRANSFER"/>
    <property type="match status" value="1"/>
</dbReference>
<accession>Q5WX86</accession>
<keyword id="KW-0328">Glycosyltransferase</keyword>
<keyword id="KW-0460">Magnesium</keyword>
<keyword id="KW-0665">Pyrimidine biosynthesis</keyword>
<keyword id="KW-0808">Transferase</keyword>
<feature type="chain" id="PRO_1000066251" description="Orotate phosphoribosyltransferase">
    <location>
        <begin position="1"/>
        <end position="211"/>
    </location>
</feature>
<feature type="binding site" description="in other chain" evidence="1">
    <location>
        <position position="26"/>
    </location>
    <ligand>
        <name>5-phospho-alpha-D-ribose 1-diphosphate</name>
        <dbReference type="ChEBI" id="CHEBI:58017"/>
        <note>ligand shared between dimeric partners</note>
    </ligand>
</feature>
<feature type="binding site" evidence="1">
    <location>
        <begin position="34"/>
        <end position="35"/>
    </location>
    <ligand>
        <name>orotate</name>
        <dbReference type="ChEBI" id="CHEBI:30839"/>
    </ligand>
</feature>
<feature type="binding site" description="in other chain" evidence="1">
    <location>
        <begin position="72"/>
        <end position="73"/>
    </location>
    <ligand>
        <name>5-phospho-alpha-D-ribose 1-diphosphate</name>
        <dbReference type="ChEBI" id="CHEBI:58017"/>
        <note>ligand shared between dimeric partners</note>
    </ligand>
</feature>
<feature type="binding site" evidence="1">
    <location>
        <position position="98"/>
    </location>
    <ligand>
        <name>5-phospho-alpha-D-ribose 1-diphosphate</name>
        <dbReference type="ChEBI" id="CHEBI:58017"/>
        <note>ligand shared between dimeric partners</note>
    </ligand>
</feature>
<feature type="binding site" description="in other chain" evidence="1">
    <location>
        <position position="99"/>
    </location>
    <ligand>
        <name>5-phospho-alpha-D-ribose 1-diphosphate</name>
        <dbReference type="ChEBI" id="CHEBI:58017"/>
        <note>ligand shared between dimeric partners</note>
    </ligand>
</feature>
<feature type="binding site" evidence="1">
    <location>
        <position position="102"/>
    </location>
    <ligand>
        <name>5-phospho-alpha-D-ribose 1-diphosphate</name>
        <dbReference type="ChEBI" id="CHEBI:58017"/>
        <note>ligand shared between dimeric partners</note>
    </ligand>
</feature>
<feature type="binding site" evidence="1">
    <location>
        <position position="104"/>
    </location>
    <ligand>
        <name>5-phospho-alpha-D-ribose 1-diphosphate</name>
        <dbReference type="ChEBI" id="CHEBI:58017"/>
        <note>ligand shared between dimeric partners</note>
    </ligand>
</feature>
<feature type="binding site" description="in other chain" evidence="1">
    <location>
        <begin position="123"/>
        <end position="131"/>
    </location>
    <ligand>
        <name>5-phospho-alpha-D-ribose 1-diphosphate</name>
        <dbReference type="ChEBI" id="CHEBI:58017"/>
        <note>ligand shared between dimeric partners</note>
    </ligand>
</feature>
<feature type="binding site" evidence="1">
    <location>
        <position position="127"/>
    </location>
    <ligand>
        <name>orotate</name>
        <dbReference type="ChEBI" id="CHEBI:30839"/>
    </ligand>
</feature>
<feature type="binding site" evidence="1">
    <location>
        <position position="155"/>
    </location>
    <ligand>
        <name>orotate</name>
        <dbReference type="ChEBI" id="CHEBI:30839"/>
    </ligand>
</feature>